<keyword id="KW-1185">Reference proteome</keyword>
<keyword id="KW-0694">RNA-binding</keyword>
<keyword id="KW-0804">Transcription</keyword>
<keyword id="KW-0889">Transcription antitermination</keyword>
<keyword id="KW-0805">Transcription regulation</keyword>
<evidence type="ECO:0000255" key="1">
    <source>
        <dbReference type="HAMAP-Rule" id="MF_00073"/>
    </source>
</evidence>
<dbReference type="EMBL" id="AL591688">
    <property type="protein sequence ID" value="CAC45795.1"/>
    <property type="molecule type" value="Genomic_DNA"/>
</dbReference>
<dbReference type="RefSeq" id="NP_385322.1">
    <property type="nucleotide sequence ID" value="NC_003047.1"/>
</dbReference>
<dbReference type="RefSeq" id="WP_003529296.1">
    <property type="nucleotide sequence ID" value="NC_003047.1"/>
</dbReference>
<dbReference type="SMR" id="Q92QT9"/>
<dbReference type="EnsemblBacteria" id="CAC45795">
    <property type="protein sequence ID" value="CAC45795"/>
    <property type="gene ID" value="SMc01778"/>
</dbReference>
<dbReference type="GeneID" id="89575539"/>
<dbReference type="KEGG" id="sme:SMc01778"/>
<dbReference type="PATRIC" id="fig|266834.11.peg.2628"/>
<dbReference type="eggNOG" id="COG0781">
    <property type="taxonomic scope" value="Bacteria"/>
</dbReference>
<dbReference type="HOGENOM" id="CLU_087843_4_0_5"/>
<dbReference type="OrthoDB" id="9797817at2"/>
<dbReference type="Proteomes" id="UP000001976">
    <property type="component" value="Chromosome"/>
</dbReference>
<dbReference type="GO" id="GO:0005829">
    <property type="term" value="C:cytosol"/>
    <property type="evidence" value="ECO:0007669"/>
    <property type="project" value="TreeGrafter"/>
</dbReference>
<dbReference type="GO" id="GO:0003723">
    <property type="term" value="F:RNA binding"/>
    <property type="evidence" value="ECO:0007669"/>
    <property type="project" value="UniProtKB-UniRule"/>
</dbReference>
<dbReference type="GO" id="GO:0006353">
    <property type="term" value="P:DNA-templated transcription termination"/>
    <property type="evidence" value="ECO:0007669"/>
    <property type="project" value="UniProtKB-UniRule"/>
</dbReference>
<dbReference type="GO" id="GO:0031564">
    <property type="term" value="P:transcription antitermination"/>
    <property type="evidence" value="ECO:0007669"/>
    <property type="project" value="UniProtKB-KW"/>
</dbReference>
<dbReference type="Gene3D" id="1.10.940.10">
    <property type="entry name" value="NusB-like"/>
    <property type="match status" value="1"/>
</dbReference>
<dbReference type="HAMAP" id="MF_00073">
    <property type="entry name" value="NusB"/>
    <property type="match status" value="1"/>
</dbReference>
<dbReference type="InterPro" id="IPR035926">
    <property type="entry name" value="NusB-like_sf"/>
</dbReference>
<dbReference type="InterPro" id="IPR011605">
    <property type="entry name" value="NusB_fam"/>
</dbReference>
<dbReference type="InterPro" id="IPR006027">
    <property type="entry name" value="NusB_RsmB_TIM44"/>
</dbReference>
<dbReference type="NCBIfam" id="TIGR01951">
    <property type="entry name" value="nusB"/>
    <property type="match status" value="1"/>
</dbReference>
<dbReference type="PANTHER" id="PTHR11078:SF3">
    <property type="entry name" value="ANTITERMINATION NUSB DOMAIN-CONTAINING PROTEIN"/>
    <property type="match status" value="1"/>
</dbReference>
<dbReference type="PANTHER" id="PTHR11078">
    <property type="entry name" value="N UTILIZATION SUBSTANCE PROTEIN B-RELATED"/>
    <property type="match status" value="1"/>
</dbReference>
<dbReference type="Pfam" id="PF01029">
    <property type="entry name" value="NusB"/>
    <property type="match status" value="1"/>
</dbReference>
<dbReference type="SUPFAM" id="SSF48013">
    <property type="entry name" value="NusB-like"/>
    <property type="match status" value="1"/>
</dbReference>
<comment type="function">
    <text evidence="1">Involved in transcription antitermination. Required for transcription of ribosomal RNA (rRNA) genes. Binds specifically to the boxA antiterminator sequence of the ribosomal RNA (rrn) operons.</text>
</comment>
<comment type="similarity">
    <text evidence="1">Belongs to the NusB family.</text>
</comment>
<organism>
    <name type="scientific">Rhizobium meliloti (strain 1021)</name>
    <name type="common">Ensifer meliloti</name>
    <name type="synonym">Sinorhizobium meliloti</name>
    <dbReference type="NCBI Taxonomy" id="266834"/>
    <lineage>
        <taxon>Bacteria</taxon>
        <taxon>Pseudomonadati</taxon>
        <taxon>Pseudomonadota</taxon>
        <taxon>Alphaproteobacteria</taxon>
        <taxon>Hyphomicrobiales</taxon>
        <taxon>Rhizobiaceae</taxon>
        <taxon>Sinorhizobium/Ensifer group</taxon>
        <taxon>Sinorhizobium</taxon>
    </lineage>
</organism>
<proteinExistence type="inferred from homology"/>
<protein>
    <recommendedName>
        <fullName evidence="1">Transcription antitermination protein NusB</fullName>
    </recommendedName>
    <alternativeName>
        <fullName evidence="1">Antitermination factor NusB</fullName>
    </alternativeName>
</protein>
<gene>
    <name evidence="1" type="primary">nusB</name>
    <name type="ordered locus">R01216</name>
    <name type="ORF">SMc01778</name>
</gene>
<accession>Q92QT9</accession>
<reference key="1">
    <citation type="journal article" date="2001" name="Proc. Natl. Acad. Sci. U.S.A.">
        <title>Analysis of the chromosome sequence of the legume symbiont Sinorhizobium meliloti strain 1021.</title>
        <authorList>
            <person name="Capela D."/>
            <person name="Barloy-Hubler F."/>
            <person name="Gouzy J."/>
            <person name="Bothe G."/>
            <person name="Ampe F."/>
            <person name="Batut J."/>
            <person name="Boistard P."/>
            <person name="Becker A."/>
            <person name="Boutry M."/>
            <person name="Cadieu E."/>
            <person name="Dreano S."/>
            <person name="Gloux S."/>
            <person name="Godrie T."/>
            <person name="Goffeau A."/>
            <person name="Kahn D."/>
            <person name="Kiss E."/>
            <person name="Lelaure V."/>
            <person name="Masuy D."/>
            <person name="Pohl T."/>
            <person name="Portetelle D."/>
            <person name="Puehler A."/>
            <person name="Purnelle B."/>
            <person name="Ramsperger U."/>
            <person name="Renard C."/>
            <person name="Thebault P."/>
            <person name="Vandenbol M."/>
            <person name="Weidner S."/>
            <person name="Galibert F."/>
        </authorList>
    </citation>
    <scope>NUCLEOTIDE SEQUENCE [LARGE SCALE GENOMIC DNA]</scope>
    <source>
        <strain>1021</strain>
    </source>
</reference>
<reference key="2">
    <citation type="journal article" date="2001" name="Science">
        <title>The composite genome of the legume symbiont Sinorhizobium meliloti.</title>
        <authorList>
            <person name="Galibert F."/>
            <person name="Finan T.M."/>
            <person name="Long S.R."/>
            <person name="Puehler A."/>
            <person name="Abola P."/>
            <person name="Ampe F."/>
            <person name="Barloy-Hubler F."/>
            <person name="Barnett M.J."/>
            <person name="Becker A."/>
            <person name="Boistard P."/>
            <person name="Bothe G."/>
            <person name="Boutry M."/>
            <person name="Bowser L."/>
            <person name="Buhrmester J."/>
            <person name="Cadieu E."/>
            <person name="Capela D."/>
            <person name="Chain P."/>
            <person name="Cowie A."/>
            <person name="Davis R.W."/>
            <person name="Dreano S."/>
            <person name="Federspiel N.A."/>
            <person name="Fisher R.F."/>
            <person name="Gloux S."/>
            <person name="Godrie T."/>
            <person name="Goffeau A."/>
            <person name="Golding B."/>
            <person name="Gouzy J."/>
            <person name="Gurjal M."/>
            <person name="Hernandez-Lucas I."/>
            <person name="Hong A."/>
            <person name="Huizar L."/>
            <person name="Hyman R.W."/>
            <person name="Jones T."/>
            <person name="Kahn D."/>
            <person name="Kahn M.L."/>
            <person name="Kalman S."/>
            <person name="Keating D.H."/>
            <person name="Kiss E."/>
            <person name="Komp C."/>
            <person name="Lelaure V."/>
            <person name="Masuy D."/>
            <person name="Palm C."/>
            <person name="Peck M.C."/>
            <person name="Pohl T.M."/>
            <person name="Portetelle D."/>
            <person name="Purnelle B."/>
            <person name="Ramsperger U."/>
            <person name="Surzycki R."/>
            <person name="Thebault P."/>
            <person name="Vandenbol M."/>
            <person name="Vorhoelter F.J."/>
            <person name="Weidner S."/>
            <person name="Wells D.H."/>
            <person name="Wong K."/>
            <person name="Yeh K.-C."/>
            <person name="Batut J."/>
        </authorList>
    </citation>
    <scope>NUCLEOTIDE SEQUENCE [LARGE SCALE GENOMIC DNA]</scope>
    <source>
        <strain>1021</strain>
    </source>
</reference>
<feature type="chain" id="PRO_0000176569" description="Transcription antitermination protein NusB">
    <location>
        <begin position="1"/>
        <end position="160"/>
    </location>
</feature>
<sequence>MTNTPSDQPLKQVNQRGAARLAAVQALYQMDVGGTGVLEIVAEYEEHRLGKELDGDTYLRADASWFRSIVAGVVRDQRKLDPLIGSALQDDWALSRLDSTVRAILRAGTFEILERKDVPVPVIVTEYVEIAKAFFQDEEPKLVNAVLDRIAKQVRGDQRK</sequence>
<name>NUSB_RHIME</name>